<protein>
    <recommendedName>
        <fullName evidence="1">Coenzyme PQQ synthesis protein A</fullName>
    </recommendedName>
    <alternativeName>
        <fullName evidence="1">Pyrroloquinoline quinone biosynthesis protein A</fullName>
    </alternativeName>
</protein>
<organism>
    <name type="scientific">Pseudomonas fluorescens (strain Pf0-1)</name>
    <dbReference type="NCBI Taxonomy" id="205922"/>
    <lineage>
        <taxon>Bacteria</taxon>
        <taxon>Pseudomonadati</taxon>
        <taxon>Pseudomonadota</taxon>
        <taxon>Gammaproteobacteria</taxon>
        <taxon>Pseudomonadales</taxon>
        <taxon>Pseudomonadaceae</taxon>
        <taxon>Pseudomonas</taxon>
    </lineage>
</organism>
<proteinExistence type="inferred from homology"/>
<reference key="1">
    <citation type="journal article" date="2009" name="Genome Biol.">
        <title>Genomic and genetic analyses of diversity and plant interactions of Pseudomonas fluorescens.</title>
        <authorList>
            <person name="Silby M.W."/>
            <person name="Cerdeno-Tarraga A.M."/>
            <person name="Vernikos G.S."/>
            <person name="Giddens S.R."/>
            <person name="Jackson R.W."/>
            <person name="Preston G.M."/>
            <person name="Zhang X.-X."/>
            <person name="Moon C.D."/>
            <person name="Gehrig S.M."/>
            <person name="Godfrey S.A.C."/>
            <person name="Knight C.G."/>
            <person name="Malone J.G."/>
            <person name="Robinson Z."/>
            <person name="Spiers A.J."/>
            <person name="Harris S."/>
            <person name="Challis G.L."/>
            <person name="Yaxley A.M."/>
            <person name="Harris D."/>
            <person name="Seeger K."/>
            <person name="Murphy L."/>
            <person name="Rutter S."/>
            <person name="Squares R."/>
            <person name="Quail M.A."/>
            <person name="Saunders E."/>
            <person name="Mavromatis K."/>
            <person name="Brettin T.S."/>
            <person name="Bentley S.D."/>
            <person name="Hothersall J."/>
            <person name="Stephens E."/>
            <person name="Thomas C.M."/>
            <person name="Parkhill J."/>
            <person name="Levy S.B."/>
            <person name="Rainey P.B."/>
            <person name="Thomson N.R."/>
        </authorList>
    </citation>
    <scope>NUCLEOTIDE SEQUENCE [LARGE SCALE GENOMIC DNA]</scope>
    <source>
        <strain>Pf0-1</strain>
    </source>
</reference>
<evidence type="ECO:0000255" key="1">
    <source>
        <dbReference type="HAMAP-Rule" id="MF_00656"/>
    </source>
</evidence>
<dbReference type="EMBL" id="CP000094">
    <property type="protein sequence ID" value="ABA76894.1"/>
    <property type="molecule type" value="Genomic_DNA"/>
</dbReference>
<dbReference type="RefSeq" id="WP_003444522.1">
    <property type="nucleotide sequence ID" value="NC_007492.2"/>
</dbReference>
<dbReference type="GeneID" id="96618764"/>
<dbReference type="KEGG" id="pfo:Pfl01_5157"/>
<dbReference type="HOGENOM" id="CLU_219131_0_0_6"/>
<dbReference type="UniPathway" id="UPA00539"/>
<dbReference type="Proteomes" id="UP000002704">
    <property type="component" value="Chromosome"/>
</dbReference>
<dbReference type="GO" id="GO:0018189">
    <property type="term" value="P:pyrroloquinoline quinone biosynthetic process"/>
    <property type="evidence" value="ECO:0007669"/>
    <property type="project" value="UniProtKB-UniRule"/>
</dbReference>
<dbReference type="HAMAP" id="MF_00656">
    <property type="entry name" value="PQQ_syn_PqqA"/>
    <property type="match status" value="1"/>
</dbReference>
<dbReference type="InterPro" id="IPR011725">
    <property type="entry name" value="PQQ_synth_PqqA"/>
</dbReference>
<dbReference type="NCBIfam" id="TIGR02107">
    <property type="entry name" value="PQQ_syn_pqqA"/>
    <property type="match status" value="1"/>
</dbReference>
<dbReference type="Pfam" id="PF08042">
    <property type="entry name" value="PqqA"/>
    <property type="match status" value="1"/>
</dbReference>
<keyword id="KW-0884">PQQ biosynthesis</keyword>
<feature type="chain" id="PRO_1000061702" description="Coenzyme PQQ synthesis protein A">
    <location>
        <begin position="1"/>
        <end position="24"/>
    </location>
</feature>
<feature type="cross-link" description="Pyrroloquinoline quinone (Glu-Tyr)" evidence="1">
    <location>
        <begin position="16"/>
        <end position="20"/>
    </location>
</feature>
<accession>Q3K5R0</accession>
<name>PQQA_PSEPF</name>
<gene>
    <name evidence="1" type="primary">pqqA</name>
    <name type="ordered locus">Pfl01_5157</name>
</gene>
<comment type="function">
    <text evidence="1">Required for coenzyme pyrroloquinoline quinone (PQQ) biosynthesis. PQQ is probably formed by cross-linking a specific glutamate to a specific tyrosine residue and excising these residues from the peptide.</text>
</comment>
<comment type="pathway">
    <text evidence="1">Cofactor biosynthesis; pyrroloquinoline quinone biosynthesis.</text>
</comment>
<comment type="similarity">
    <text evidence="1">Belongs to the PqqA family.</text>
</comment>
<sequence>MAWTKPAYTDLRIGFEVTMYFASR</sequence>